<reference key="1">
    <citation type="submission" date="2008-10" db="EMBL/GenBank/DDBJ databases">
        <title>Genome sequence of Clostridium botulinum A2 Kyoto.</title>
        <authorList>
            <person name="Shrivastava S."/>
            <person name="Brinkac L.M."/>
            <person name="Brown J.L."/>
            <person name="Bruce D."/>
            <person name="Detter C.C."/>
            <person name="Johnson E.A."/>
            <person name="Munk C.A."/>
            <person name="Smith L.A."/>
            <person name="Smith T.J."/>
            <person name="Sutton G."/>
            <person name="Brettin T.S."/>
        </authorList>
    </citation>
    <scope>NUCLEOTIDE SEQUENCE [LARGE SCALE GENOMIC DNA]</scope>
    <source>
        <strain>Kyoto / Type A2</strain>
    </source>
</reference>
<protein>
    <recommendedName>
        <fullName evidence="1">Argininosuccinate lyase</fullName>
        <shortName evidence="1">ASAL</shortName>
        <ecNumber evidence="1">4.3.2.1</ecNumber>
    </recommendedName>
    <alternativeName>
        <fullName evidence="1">Arginosuccinase</fullName>
    </alternativeName>
</protein>
<evidence type="ECO:0000255" key="1">
    <source>
        <dbReference type="HAMAP-Rule" id="MF_00006"/>
    </source>
</evidence>
<dbReference type="EC" id="4.3.2.1" evidence="1"/>
<dbReference type="EMBL" id="CP001581">
    <property type="protein sequence ID" value="ACO83787.1"/>
    <property type="molecule type" value="Genomic_DNA"/>
</dbReference>
<dbReference type="RefSeq" id="WP_012703877.1">
    <property type="nucleotide sequence ID" value="NC_012563.1"/>
</dbReference>
<dbReference type="SMR" id="C1FU67"/>
<dbReference type="KEGG" id="cby:CLM_3034"/>
<dbReference type="eggNOG" id="COG0165">
    <property type="taxonomic scope" value="Bacteria"/>
</dbReference>
<dbReference type="HOGENOM" id="CLU_027272_2_3_9"/>
<dbReference type="UniPathway" id="UPA00068">
    <property type="reaction ID" value="UER00114"/>
</dbReference>
<dbReference type="Proteomes" id="UP000001374">
    <property type="component" value="Chromosome"/>
</dbReference>
<dbReference type="GO" id="GO:0005829">
    <property type="term" value="C:cytosol"/>
    <property type="evidence" value="ECO:0007669"/>
    <property type="project" value="TreeGrafter"/>
</dbReference>
<dbReference type="GO" id="GO:0004056">
    <property type="term" value="F:argininosuccinate lyase activity"/>
    <property type="evidence" value="ECO:0007669"/>
    <property type="project" value="UniProtKB-UniRule"/>
</dbReference>
<dbReference type="GO" id="GO:0042450">
    <property type="term" value="P:arginine biosynthetic process via ornithine"/>
    <property type="evidence" value="ECO:0007669"/>
    <property type="project" value="InterPro"/>
</dbReference>
<dbReference type="GO" id="GO:0006526">
    <property type="term" value="P:L-arginine biosynthetic process"/>
    <property type="evidence" value="ECO:0007669"/>
    <property type="project" value="UniProtKB-UniRule"/>
</dbReference>
<dbReference type="CDD" id="cd01359">
    <property type="entry name" value="Argininosuccinate_lyase"/>
    <property type="match status" value="1"/>
</dbReference>
<dbReference type="FunFam" id="1.10.275.10:FF:000002">
    <property type="entry name" value="Argininosuccinate lyase"/>
    <property type="match status" value="1"/>
</dbReference>
<dbReference type="FunFam" id="1.10.40.30:FF:000001">
    <property type="entry name" value="Argininosuccinate lyase"/>
    <property type="match status" value="1"/>
</dbReference>
<dbReference type="FunFam" id="1.20.200.10:FF:000002">
    <property type="entry name" value="Argininosuccinate lyase"/>
    <property type="match status" value="1"/>
</dbReference>
<dbReference type="Gene3D" id="1.10.40.30">
    <property type="entry name" value="Fumarase/aspartase (C-terminal domain)"/>
    <property type="match status" value="1"/>
</dbReference>
<dbReference type="Gene3D" id="1.20.200.10">
    <property type="entry name" value="Fumarase/aspartase (Central domain)"/>
    <property type="match status" value="1"/>
</dbReference>
<dbReference type="Gene3D" id="1.10.275.10">
    <property type="entry name" value="Fumarase/aspartase (N-terminal domain)"/>
    <property type="match status" value="1"/>
</dbReference>
<dbReference type="HAMAP" id="MF_00006">
    <property type="entry name" value="Arg_succ_lyase"/>
    <property type="match status" value="1"/>
</dbReference>
<dbReference type="InterPro" id="IPR029419">
    <property type="entry name" value="Arg_succ_lyase_C"/>
</dbReference>
<dbReference type="InterPro" id="IPR009049">
    <property type="entry name" value="Argininosuccinate_lyase"/>
</dbReference>
<dbReference type="InterPro" id="IPR024083">
    <property type="entry name" value="Fumarase/histidase_N"/>
</dbReference>
<dbReference type="InterPro" id="IPR020557">
    <property type="entry name" value="Fumarate_lyase_CS"/>
</dbReference>
<dbReference type="InterPro" id="IPR000362">
    <property type="entry name" value="Fumarate_lyase_fam"/>
</dbReference>
<dbReference type="InterPro" id="IPR022761">
    <property type="entry name" value="Fumarate_lyase_N"/>
</dbReference>
<dbReference type="InterPro" id="IPR008948">
    <property type="entry name" value="L-Aspartase-like"/>
</dbReference>
<dbReference type="NCBIfam" id="TIGR00838">
    <property type="entry name" value="argH"/>
    <property type="match status" value="1"/>
</dbReference>
<dbReference type="PANTHER" id="PTHR43814">
    <property type="entry name" value="ARGININOSUCCINATE LYASE"/>
    <property type="match status" value="1"/>
</dbReference>
<dbReference type="PANTHER" id="PTHR43814:SF1">
    <property type="entry name" value="ARGININOSUCCINATE LYASE"/>
    <property type="match status" value="1"/>
</dbReference>
<dbReference type="Pfam" id="PF14698">
    <property type="entry name" value="ASL_C2"/>
    <property type="match status" value="1"/>
</dbReference>
<dbReference type="Pfam" id="PF00206">
    <property type="entry name" value="Lyase_1"/>
    <property type="match status" value="1"/>
</dbReference>
<dbReference type="PRINTS" id="PR00145">
    <property type="entry name" value="ARGSUCLYASE"/>
</dbReference>
<dbReference type="PRINTS" id="PR00149">
    <property type="entry name" value="FUMRATELYASE"/>
</dbReference>
<dbReference type="SUPFAM" id="SSF48557">
    <property type="entry name" value="L-aspartase-like"/>
    <property type="match status" value="1"/>
</dbReference>
<dbReference type="PROSITE" id="PS00163">
    <property type="entry name" value="FUMARATE_LYASES"/>
    <property type="match status" value="1"/>
</dbReference>
<proteinExistence type="inferred from homology"/>
<gene>
    <name evidence="1" type="primary">argH</name>
    <name type="ordered locus">CLM_3034</name>
</gene>
<accession>C1FU67</accession>
<organism>
    <name type="scientific">Clostridium botulinum (strain Kyoto / Type A2)</name>
    <dbReference type="NCBI Taxonomy" id="536232"/>
    <lineage>
        <taxon>Bacteria</taxon>
        <taxon>Bacillati</taxon>
        <taxon>Bacillota</taxon>
        <taxon>Clostridia</taxon>
        <taxon>Eubacteriales</taxon>
        <taxon>Clostridiaceae</taxon>
        <taxon>Clostridium</taxon>
    </lineage>
</organism>
<feature type="chain" id="PRO_1000116315" description="Argininosuccinate lyase">
    <location>
        <begin position="1"/>
        <end position="440"/>
    </location>
</feature>
<keyword id="KW-0028">Amino-acid biosynthesis</keyword>
<keyword id="KW-0055">Arginine biosynthesis</keyword>
<keyword id="KW-0963">Cytoplasm</keyword>
<keyword id="KW-0456">Lyase</keyword>
<sequence>MKLWGGRFKEEESKLMEDFNSSLSFDKKLYYEDIKGSIAHVKMLTNQNIIKEEEKEKILLGLEEILKEIDEGILKIEGDYEDIHSFVEINLINKIGNVGKKLHTGRSRNDQVALDMKLYAKKSTEEVIECLKELMDSLIKVGNENNYIMPGYTHLQRAQVVTFRYHLLAYFEMFKRDEKRLENALEILNESPLGSGALAGSTYNIDREYTAKLLGFRKPVDNFLDGVSDRDYIIELISKFSIIMMHLSRLSEELILWSSSEFRFIQIGDAYSTGSSIMPQKKNPDGAELIRGKIGRVYGDLISILTVMKSLPLAYNKDMQEDKEPFFDAKDTVISCLKVMEGIISTLKVNKENLMKSVKKGFLNATEAADYLVNKGMAFRDAHKVIGEVVIYCEDKNSAIEDLSLEELKQFSDLFCEDIYEFIDYKNSINKGIKKEMGYF</sequence>
<comment type="catalytic activity">
    <reaction evidence="1">
        <text>2-(N(omega)-L-arginino)succinate = fumarate + L-arginine</text>
        <dbReference type="Rhea" id="RHEA:24020"/>
        <dbReference type="ChEBI" id="CHEBI:29806"/>
        <dbReference type="ChEBI" id="CHEBI:32682"/>
        <dbReference type="ChEBI" id="CHEBI:57472"/>
        <dbReference type="EC" id="4.3.2.1"/>
    </reaction>
</comment>
<comment type="pathway">
    <text evidence="1">Amino-acid biosynthesis; L-arginine biosynthesis; L-arginine from L-ornithine and carbamoyl phosphate: step 3/3.</text>
</comment>
<comment type="subcellular location">
    <subcellularLocation>
        <location evidence="1">Cytoplasm</location>
    </subcellularLocation>
</comment>
<comment type="similarity">
    <text evidence="1">Belongs to the lyase 1 family. Argininosuccinate lyase subfamily.</text>
</comment>
<name>ARLY_CLOBJ</name>